<reference key="1">
    <citation type="submission" date="2007-07" db="EMBL/GenBank/DDBJ databases">
        <title>Complete sequence of Fervidobacterium nodosum Rt17-B1.</title>
        <authorList>
            <consortium name="US DOE Joint Genome Institute"/>
            <person name="Copeland A."/>
            <person name="Lucas S."/>
            <person name="Lapidus A."/>
            <person name="Barry K."/>
            <person name="Glavina del Rio T."/>
            <person name="Dalin E."/>
            <person name="Tice H."/>
            <person name="Pitluck S."/>
            <person name="Saunders E."/>
            <person name="Brettin T."/>
            <person name="Bruce D."/>
            <person name="Detter J.C."/>
            <person name="Han C."/>
            <person name="Schmutz J."/>
            <person name="Larimer F."/>
            <person name="Land M."/>
            <person name="Hauser L."/>
            <person name="Kyrpides N."/>
            <person name="Mikhailova N."/>
            <person name="Nelson K."/>
            <person name="Gogarten J.P."/>
            <person name="Noll K."/>
            <person name="Richardson P."/>
        </authorList>
    </citation>
    <scope>NUCLEOTIDE SEQUENCE [LARGE SCALE GENOMIC DNA]</scope>
    <source>
        <strain>ATCC 35602 / DSM 5306 / Rt17-B1</strain>
    </source>
</reference>
<gene>
    <name evidence="1" type="primary">surE</name>
    <name type="ordered locus">Fnod_0953</name>
</gene>
<feature type="chain" id="PRO_1000071161" description="5'-nucleotidase SurE">
    <location>
        <begin position="1"/>
        <end position="259"/>
    </location>
</feature>
<feature type="binding site" evidence="1">
    <location>
        <position position="8"/>
    </location>
    <ligand>
        <name>a divalent metal cation</name>
        <dbReference type="ChEBI" id="CHEBI:60240"/>
    </ligand>
</feature>
<feature type="binding site" evidence="1">
    <location>
        <position position="9"/>
    </location>
    <ligand>
        <name>a divalent metal cation</name>
        <dbReference type="ChEBI" id="CHEBI:60240"/>
    </ligand>
</feature>
<feature type="binding site" evidence="1">
    <location>
        <position position="39"/>
    </location>
    <ligand>
        <name>a divalent metal cation</name>
        <dbReference type="ChEBI" id="CHEBI:60240"/>
    </ligand>
</feature>
<feature type="binding site" evidence="1">
    <location>
        <position position="98"/>
    </location>
    <ligand>
        <name>a divalent metal cation</name>
        <dbReference type="ChEBI" id="CHEBI:60240"/>
    </ligand>
</feature>
<sequence length="259" mass="28978">MNILLVNDDGVTAPGILCAARYLSKEHYVVVSAPESEQSAVGHGITLRFPLWARKLDINEPFEMYAVSGTPADCVKIGLDVIYKDKGIMPDVVISGINRGENLGTDVVYSGTVSGALEGAIAGVPSIAISVADFKDPIYETGARFLLNFLKEFDVKRIPRFTALNINVPSVPYEQIKGWKLTRQSKRRYEDYFEKRIDPYGKDYYWMLGDIIEDDPDPKADYKALKEGYISVTPITIFMTNEELLKELEGIYGDGKNFR</sequence>
<proteinExistence type="inferred from homology"/>
<accession>A7HLM0</accession>
<protein>
    <recommendedName>
        <fullName evidence="1">5'-nucleotidase SurE</fullName>
        <ecNumber evidence="1">3.1.3.5</ecNumber>
    </recommendedName>
    <alternativeName>
        <fullName evidence="1">Nucleoside 5'-monophosphate phosphohydrolase</fullName>
    </alternativeName>
</protein>
<name>SURE_FERNB</name>
<keyword id="KW-0963">Cytoplasm</keyword>
<keyword id="KW-0378">Hydrolase</keyword>
<keyword id="KW-0479">Metal-binding</keyword>
<keyword id="KW-0547">Nucleotide-binding</keyword>
<keyword id="KW-1185">Reference proteome</keyword>
<evidence type="ECO:0000255" key="1">
    <source>
        <dbReference type="HAMAP-Rule" id="MF_00060"/>
    </source>
</evidence>
<comment type="function">
    <text evidence="1">Nucleotidase that shows phosphatase activity on nucleoside 5'-monophosphates.</text>
</comment>
<comment type="catalytic activity">
    <reaction evidence="1">
        <text>a ribonucleoside 5'-phosphate + H2O = a ribonucleoside + phosphate</text>
        <dbReference type="Rhea" id="RHEA:12484"/>
        <dbReference type="ChEBI" id="CHEBI:15377"/>
        <dbReference type="ChEBI" id="CHEBI:18254"/>
        <dbReference type="ChEBI" id="CHEBI:43474"/>
        <dbReference type="ChEBI" id="CHEBI:58043"/>
        <dbReference type="EC" id="3.1.3.5"/>
    </reaction>
</comment>
<comment type="cofactor">
    <cofactor evidence="1">
        <name>a divalent metal cation</name>
        <dbReference type="ChEBI" id="CHEBI:60240"/>
    </cofactor>
    <text evidence="1">Binds 1 divalent metal cation per subunit.</text>
</comment>
<comment type="subcellular location">
    <subcellularLocation>
        <location evidence="1">Cytoplasm</location>
    </subcellularLocation>
</comment>
<comment type="similarity">
    <text evidence="1">Belongs to the SurE nucleotidase family.</text>
</comment>
<dbReference type="EC" id="3.1.3.5" evidence="1"/>
<dbReference type="EMBL" id="CP000771">
    <property type="protein sequence ID" value="ABS60803.1"/>
    <property type="molecule type" value="Genomic_DNA"/>
</dbReference>
<dbReference type="RefSeq" id="WP_011994118.1">
    <property type="nucleotide sequence ID" value="NC_009718.1"/>
</dbReference>
<dbReference type="SMR" id="A7HLM0"/>
<dbReference type="STRING" id="381764.Fnod_0953"/>
<dbReference type="KEGG" id="fno:Fnod_0953"/>
<dbReference type="eggNOG" id="COG0496">
    <property type="taxonomic scope" value="Bacteria"/>
</dbReference>
<dbReference type="HOGENOM" id="CLU_045192_1_2_0"/>
<dbReference type="OrthoDB" id="9780815at2"/>
<dbReference type="Proteomes" id="UP000002415">
    <property type="component" value="Chromosome"/>
</dbReference>
<dbReference type="GO" id="GO:0005737">
    <property type="term" value="C:cytoplasm"/>
    <property type="evidence" value="ECO:0007669"/>
    <property type="project" value="UniProtKB-SubCell"/>
</dbReference>
<dbReference type="GO" id="GO:0008254">
    <property type="term" value="F:3'-nucleotidase activity"/>
    <property type="evidence" value="ECO:0007669"/>
    <property type="project" value="TreeGrafter"/>
</dbReference>
<dbReference type="GO" id="GO:0008253">
    <property type="term" value="F:5'-nucleotidase activity"/>
    <property type="evidence" value="ECO:0007669"/>
    <property type="project" value="UniProtKB-UniRule"/>
</dbReference>
<dbReference type="GO" id="GO:0004309">
    <property type="term" value="F:exopolyphosphatase activity"/>
    <property type="evidence" value="ECO:0007669"/>
    <property type="project" value="TreeGrafter"/>
</dbReference>
<dbReference type="GO" id="GO:0046872">
    <property type="term" value="F:metal ion binding"/>
    <property type="evidence" value="ECO:0007669"/>
    <property type="project" value="UniProtKB-UniRule"/>
</dbReference>
<dbReference type="GO" id="GO:0000166">
    <property type="term" value="F:nucleotide binding"/>
    <property type="evidence" value="ECO:0007669"/>
    <property type="project" value="UniProtKB-KW"/>
</dbReference>
<dbReference type="FunFam" id="3.40.1210.10:FF:000001">
    <property type="entry name" value="5'/3'-nucleotidase SurE"/>
    <property type="match status" value="1"/>
</dbReference>
<dbReference type="Gene3D" id="3.40.1210.10">
    <property type="entry name" value="Survival protein SurE-like phosphatase/nucleotidase"/>
    <property type="match status" value="1"/>
</dbReference>
<dbReference type="HAMAP" id="MF_00060">
    <property type="entry name" value="SurE"/>
    <property type="match status" value="1"/>
</dbReference>
<dbReference type="InterPro" id="IPR030048">
    <property type="entry name" value="SurE"/>
</dbReference>
<dbReference type="InterPro" id="IPR002828">
    <property type="entry name" value="SurE-like_Pase/nucleotidase"/>
</dbReference>
<dbReference type="InterPro" id="IPR036523">
    <property type="entry name" value="SurE-like_sf"/>
</dbReference>
<dbReference type="NCBIfam" id="NF001490">
    <property type="entry name" value="PRK00346.1-4"/>
    <property type="match status" value="1"/>
</dbReference>
<dbReference type="NCBIfam" id="NF001492">
    <property type="entry name" value="PRK00346.2-2"/>
    <property type="match status" value="1"/>
</dbReference>
<dbReference type="NCBIfam" id="NF010545">
    <property type="entry name" value="PRK13935.1"/>
    <property type="match status" value="1"/>
</dbReference>
<dbReference type="NCBIfam" id="TIGR00087">
    <property type="entry name" value="surE"/>
    <property type="match status" value="1"/>
</dbReference>
<dbReference type="PANTHER" id="PTHR30457">
    <property type="entry name" value="5'-NUCLEOTIDASE SURE"/>
    <property type="match status" value="1"/>
</dbReference>
<dbReference type="PANTHER" id="PTHR30457:SF12">
    <property type="entry name" value="5'_3'-NUCLEOTIDASE SURE"/>
    <property type="match status" value="1"/>
</dbReference>
<dbReference type="Pfam" id="PF01975">
    <property type="entry name" value="SurE"/>
    <property type="match status" value="1"/>
</dbReference>
<dbReference type="SUPFAM" id="SSF64167">
    <property type="entry name" value="SurE-like"/>
    <property type="match status" value="1"/>
</dbReference>
<organism>
    <name type="scientific">Fervidobacterium nodosum (strain ATCC 35602 / DSM 5306 / Rt17-B1)</name>
    <dbReference type="NCBI Taxonomy" id="381764"/>
    <lineage>
        <taxon>Bacteria</taxon>
        <taxon>Thermotogati</taxon>
        <taxon>Thermotogota</taxon>
        <taxon>Thermotogae</taxon>
        <taxon>Thermotogales</taxon>
        <taxon>Fervidobacteriaceae</taxon>
        <taxon>Fervidobacterium</taxon>
    </lineage>
</organism>